<gene>
    <name evidence="1" type="primary">lexA</name>
    <name type="ordered locus">Shewmr4_3789</name>
</gene>
<name>LEXA_SHESM</name>
<evidence type="ECO:0000255" key="1">
    <source>
        <dbReference type="HAMAP-Rule" id="MF_00015"/>
    </source>
</evidence>
<comment type="function">
    <text evidence="1">Represses a number of genes involved in the response to DNA damage (SOS response), including recA and lexA. In the presence of single-stranded DNA, RecA interacts with LexA causing an autocatalytic cleavage which disrupts the DNA-binding part of LexA, leading to derepression of the SOS regulon and eventually DNA repair.</text>
</comment>
<comment type="catalytic activity">
    <reaction evidence="1">
        <text>Hydrolysis of Ala-|-Gly bond in repressor LexA.</text>
        <dbReference type="EC" id="3.4.21.88"/>
    </reaction>
</comment>
<comment type="subunit">
    <text evidence="1">Homodimer.</text>
</comment>
<comment type="similarity">
    <text evidence="1">Belongs to the peptidase S24 family.</text>
</comment>
<organism>
    <name type="scientific">Shewanella sp. (strain MR-4)</name>
    <dbReference type="NCBI Taxonomy" id="60480"/>
    <lineage>
        <taxon>Bacteria</taxon>
        <taxon>Pseudomonadati</taxon>
        <taxon>Pseudomonadota</taxon>
        <taxon>Gammaproteobacteria</taxon>
        <taxon>Alteromonadales</taxon>
        <taxon>Shewanellaceae</taxon>
        <taxon>Shewanella</taxon>
    </lineage>
</organism>
<protein>
    <recommendedName>
        <fullName evidence="1">LexA repressor</fullName>
        <ecNumber evidence="1">3.4.21.88</ecNumber>
    </recommendedName>
</protein>
<proteinExistence type="inferred from homology"/>
<reference key="1">
    <citation type="submission" date="2006-08" db="EMBL/GenBank/DDBJ databases">
        <title>Complete sequence of Shewanella sp. MR-4.</title>
        <authorList>
            <consortium name="US DOE Joint Genome Institute"/>
            <person name="Copeland A."/>
            <person name="Lucas S."/>
            <person name="Lapidus A."/>
            <person name="Barry K."/>
            <person name="Detter J.C."/>
            <person name="Glavina del Rio T."/>
            <person name="Hammon N."/>
            <person name="Israni S."/>
            <person name="Dalin E."/>
            <person name="Tice H."/>
            <person name="Pitluck S."/>
            <person name="Kiss H."/>
            <person name="Brettin T."/>
            <person name="Bruce D."/>
            <person name="Han C."/>
            <person name="Tapia R."/>
            <person name="Gilna P."/>
            <person name="Schmutz J."/>
            <person name="Larimer F."/>
            <person name="Land M."/>
            <person name="Hauser L."/>
            <person name="Kyrpides N."/>
            <person name="Mikhailova N."/>
            <person name="Nealson K."/>
            <person name="Konstantinidis K."/>
            <person name="Klappenbach J."/>
            <person name="Tiedje J."/>
            <person name="Richardson P."/>
        </authorList>
    </citation>
    <scope>NUCLEOTIDE SEQUENCE [LARGE SCALE GENOMIC DNA]</scope>
    <source>
        <strain>MR-4</strain>
    </source>
</reference>
<dbReference type="EC" id="3.4.21.88" evidence="1"/>
<dbReference type="EMBL" id="CP000446">
    <property type="protein sequence ID" value="ABI40852.1"/>
    <property type="molecule type" value="Genomic_DNA"/>
</dbReference>
<dbReference type="RefSeq" id="WP_011624510.1">
    <property type="nucleotide sequence ID" value="NC_008321.1"/>
</dbReference>
<dbReference type="SMR" id="Q0HDL5"/>
<dbReference type="MEROPS" id="S24.001"/>
<dbReference type="GeneID" id="94729898"/>
<dbReference type="KEGG" id="she:Shewmr4_3789"/>
<dbReference type="HOGENOM" id="CLU_066192_45_3_6"/>
<dbReference type="GO" id="GO:0003677">
    <property type="term" value="F:DNA binding"/>
    <property type="evidence" value="ECO:0007669"/>
    <property type="project" value="UniProtKB-UniRule"/>
</dbReference>
<dbReference type="GO" id="GO:0004252">
    <property type="term" value="F:serine-type endopeptidase activity"/>
    <property type="evidence" value="ECO:0007669"/>
    <property type="project" value="UniProtKB-UniRule"/>
</dbReference>
<dbReference type="GO" id="GO:0006281">
    <property type="term" value="P:DNA repair"/>
    <property type="evidence" value="ECO:0007669"/>
    <property type="project" value="UniProtKB-UniRule"/>
</dbReference>
<dbReference type="GO" id="GO:0006260">
    <property type="term" value="P:DNA replication"/>
    <property type="evidence" value="ECO:0007669"/>
    <property type="project" value="UniProtKB-UniRule"/>
</dbReference>
<dbReference type="GO" id="GO:0045892">
    <property type="term" value="P:negative regulation of DNA-templated transcription"/>
    <property type="evidence" value="ECO:0007669"/>
    <property type="project" value="UniProtKB-UniRule"/>
</dbReference>
<dbReference type="GO" id="GO:0006508">
    <property type="term" value="P:proteolysis"/>
    <property type="evidence" value="ECO:0007669"/>
    <property type="project" value="InterPro"/>
</dbReference>
<dbReference type="GO" id="GO:0009432">
    <property type="term" value="P:SOS response"/>
    <property type="evidence" value="ECO:0007669"/>
    <property type="project" value="UniProtKB-UniRule"/>
</dbReference>
<dbReference type="CDD" id="cd06529">
    <property type="entry name" value="S24_LexA-like"/>
    <property type="match status" value="1"/>
</dbReference>
<dbReference type="FunFam" id="1.10.10.10:FF:000009">
    <property type="entry name" value="LexA repressor"/>
    <property type="match status" value="1"/>
</dbReference>
<dbReference type="FunFam" id="2.10.109.10:FF:000001">
    <property type="entry name" value="LexA repressor"/>
    <property type="match status" value="1"/>
</dbReference>
<dbReference type="Gene3D" id="2.10.109.10">
    <property type="entry name" value="Umud Fragment, subunit A"/>
    <property type="match status" value="1"/>
</dbReference>
<dbReference type="Gene3D" id="1.10.10.10">
    <property type="entry name" value="Winged helix-like DNA-binding domain superfamily/Winged helix DNA-binding domain"/>
    <property type="match status" value="1"/>
</dbReference>
<dbReference type="HAMAP" id="MF_00015">
    <property type="entry name" value="LexA"/>
    <property type="match status" value="1"/>
</dbReference>
<dbReference type="InterPro" id="IPR006200">
    <property type="entry name" value="LexA"/>
</dbReference>
<dbReference type="InterPro" id="IPR039418">
    <property type="entry name" value="LexA-like"/>
</dbReference>
<dbReference type="InterPro" id="IPR036286">
    <property type="entry name" value="LexA/Signal_pep-like_sf"/>
</dbReference>
<dbReference type="InterPro" id="IPR006199">
    <property type="entry name" value="LexA_DNA-bd_dom"/>
</dbReference>
<dbReference type="InterPro" id="IPR050077">
    <property type="entry name" value="LexA_repressor"/>
</dbReference>
<dbReference type="InterPro" id="IPR006197">
    <property type="entry name" value="Peptidase_S24_LexA"/>
</dbReference>
<dbReference type="InterPro" id="IPR015927">
    <property type="entry name" value="Peptidase_S24_S26A/B/C"/>
</dbReference>
<dbReference type="InterPro" id="IPR036388">
    <property type="entry name" value="WH-like_DNA-bd_sf"/>
</dbReference>
<dbReference type="InterPro" id="IPR036390">
    <property type="entry name" value="WH_DNA-bd_sf"/>
</dbReference>
<dbReference type="NCBIfam" id="TIGR00498">
    <property type="entry name" value="lexA"/>
    <property type="match status" value="1"/>
</dbReference>
<dbReference type="PANTHER" id="PTHR33516">
    <property type="entry name" value="LEXA REPRESSOR"/>
    <property type="match status" value="1"/>
</dbReference>
<dbReference type="PANTHER" id="PTHR33516:SF2">
    <property type="entry name" value="LEXA REPRESSOR-RELATED"/>
    <property type="match status" value="1"/>
</dbReference>
<dbReference type="Pfam" id="PF01726">
    <property type="entry name" value="LexA_DNA_bind"/>
    <property type="match status" value="1"/>
</dbReference>
<dbReference type="Pfam" id="PF00717">
    <property type="entry name" value="Peptidase_S24"/>
    <property type="match status" value="1"/>
</dbReference>
<dbReference type="PRINTS" id="PR00726">
    <property type="entry name" value="LEXASERPTASE"/>
</dbReference>
<dbReference type="SUPFAM" id="SSF51306">
    <property type="entry name" value="LexA/Signal peptidase"/>
    <property type="match status" value="1"/>
</dbReference>
<dbReference type="SUPFAM" id="SSF46785">
    <property type="entry name" value="Winged helix' DNA-binding domain"/>
    <property type="match status" value="1"/>
</dbReference>
<feature type="chain" id="PRO_1000001340" description="LexA repressor">
    <location>
        <begin position="1"/>
        <end position="206"/>
    </location>
</feature>
<feature type="DNA-binding region" description="H-T-H motif" evidence="1">
    <location>
        <begin position="28"/>
        <end position="48"/>
    </location>
</feature>
<feature type="active site" description="For autocatalytic cleavage activity" evidence="1">
    <location>
        <position position="123"/>
    </location>
</feature>
<feature type="active site" description="For autocatalytic cleavage activity" evidence="1">
    <location>
        <position position="160"/>
    </location>
</feature>
<feature type="site" description="Cleavage; by autolysis" evidence="1">
    <location>
        <begin position="88"/>
        <end position="89"/>
    </location>
</feature>
<keyword id="KW-0068">Autocatalytic cleavage</keyword>
<keyword id="KW-0227">DNA damage</keyword>
<keyword id="KW-0234">DNA repair</keyword>
<keyword id="KW-0235">DNA replication</keyword>
<keyword id="KW-0238">DNA-binding</keyword>
<keyword id="KW-0378">Hydrolase</keyword>
<keyword id="KW-0678">Repressor</keyword>
<keyword id="KW-0742">SOS response</keyword>
<keyword id="KW-0804">Transcription</keyword>
<keyword id="KW-0805">Transcription regulation</keyword>
<accession>Q0HDL5</accession>
<sequence>MRPLTPRQAEILELIKRNIAETGMPPTRAEIATRLGFKSANAAEEHLKALAKKGCIEIMPGTSRGIRLPVEEEDNSESGLPLIGQVAAGEPILAQEHVEQYYQVDPSMFHPAADFLLRVRGDSMKNIGILEGDLLAVHKVQQARNGQVVVARVDDDVTVKRFEKKGNLVYLHAENEDYSPIKVDLSFQSLTIEGLAVGVIRNGDWL</sequence>